<dbReference type="EC" id="4.2.1.8" evidence="1"/>
<dbReference type="EMBL" id="CU928164">
    <property type="protein sequence ID" value="CAR20892.1"/>
    <property type="molecule type" value="Genomic_DNA"/>
</dbReference>
<dbReference type="RefSeq" id="WP_000438591.1">
    <property type="nucleotide sequence ID" value="NC_011750.1"/>
</dbReference>
<dbReference type="RefSeq" id="YP_002410650.1">
    <property type="nucleotide sequence ID" value="NC_011750.1"/>
</dbReference>
<dbReference type="SMR" id="B7NV92"/>
<dbReference type="STRING" id="585057.ECIAI39_4795"/>
<dbReference type="KEGG" id="ect:ECIAI39_4795"/>
<dbReference type="PATRIC" id="fig|585057.6.peg.4950"/>
<dbReference type="HOGENOM" id="CLU_058621_2_0_6"/>
<dbReference type="UniPathway" id="UPA00246"/>
<dbReference type="Proteomes" id="UP000000749">
    <property type="component" value="Chromosome"/>
</dbReference>
<dbReference type="GO" id="GO:0008198">
    <property type="term" value="F:ferrous iron binding"/>
    <property type="evidence" value="ECO:0007669"/>
    <property type="project" value="TreeGrafter"/>
</dbReference>
<dbReference type="GO" id="GO:0030145">
    <property type="term" value="F:manganese ion binding"/>
    <property type="evidence" value="ECO:0007669"/>
    <property type="project" value="TreeGrafter"/>
</dbReference>
<dbReference type="GO" id="GO:0008927">
    <property type="term" value="F:mannonate dehydratase activity"/>
    <property type="evidence" value="ECO:0007669"/>
    <property type="project" value="UniProtKB-UniRule"/>
</dbReference>
<dbReference type="GO" id="GO:0042840">
    <property type="term" value="P:D-glucuronate catabolic process"/>
    <property type="evidence" value="ECO:0007669"/>
    <property type="project" value="TreeGrafter"/>
</dbReference>
<dbReference type="FunFam" id="3.20.20.150:FF:000004">
    <property type="entry name" value="Mannonate dehydratase"/>
    <property type="match status" value="1"/>
</dbReference>
<dbReference type="FunFam" id="3.20.20.150:FF:000005">
    <property type="entry name" value="Mannonate dehydratase"/>
    <property type="match status" value="1"/>
</dbReference>
<dbReference type="Gene3D" id="3.20.20.150">
    <property type="entry name" value="Divalent-metal-dependent TIM barrel enzymes"/>
    <property type="match status" value="2"/>
</dbReference>
<dbReference type="HAMAP" id="MF_00106">
    <property type="entry name" value="UxuA"/>
    <property type="match status" value="1"/>
</dbReference>
<dbReference type="InterPro" id="IPR004628">
    <property type="entry name" value="Man_deHydtase"/>
</dbReference>
<dbReference type="InterPro" id="IPR036237">
    <property type="entry name" value="Xyl_isomerase-like_sf"/>
</dbReference>
<dbReference type="NCBIfam" id="NF003027">
    <property type="entry name" value="PRK03906.1"/>
    <property type="match status" value="1"/>
</dbReference>
<dbReference type="NCBIfam" id="TIGR00695">
    <property type="entry name" value="uxuA"/>
    <property type="match status" value="1"/>
</dbReference>
<dbReference type="PANTHER" id="PTHR30387">
    <property type="entry name" value="MANNONATE DEHYDRATASE"/>
    <property type="match status" value="1"/>
</dbReference>
<dbReference type="PANTHER" id="PTHR30387:SF2">
    <property type="entry name" value="MANNONATE DEHYDRATASE"/>
    <property type="match status" value="1"/>
</dbReference>
<dbReference type="Pfam" id="PF03786">
    <property type="entry name" value="UxuA"/>
    <property type="match status" value="1"/>
</dbReference>
<dbReference type="PIRSF" id="PIRSF016049">
    <property type="entry name" value="Man_dehyd"/>
    <property type="match status" value="1"/>
</dbReference>
<dbReference type="SUPFAM" id="SSF51658">
    <property type="entry name" value="Xylose isomerase-like"/>
    <property type="match status" value="1"/>
</dbReference>
<keyword id="KW-0408">Iron</keyword>
<keyword id="KW-0456">Lyase</keyword>
<keyword id="KW-0464">Manganese</keyword>
<gene>
    <name evidence="1" type="primary">uxuA</name>
    <name type="ordered locus">ECIAI39_4795</name>
</gene>
<proteinExistence type="inferred from homology"/>
<protein>
    <recommendedName>
        <fullName evidence="1">Mannonate dehydratase</fullName>
        <ecNumber evidence="1">4.2.1.8</ecNumber>
    </recommendedName>
    <alternativeName>
        <fullName evidence="1">D-mannonate hydro-lyase</fullName>
    </alternativeName>
</protein>
<evidence type="ECO:0000255" key="1">
    <source>
        <dbReference type="HAMAP-Rule" id="MF_00106"/>
    </source>
</evidence>
<feature type="chain" id="PRO_1000197929" description="Mannonate dehydratase">
    <location>
        <begin position="1"/>
        <end position="394"/>
    </location>
</feature>
<organism>
    <name type="scientific">Escherichia coli O7:K1 (strain IAI39 / ExPEC)</name>
    <dbReference type="NCBI Taxonomy" id="585057"/>
    <lineage>
        <taxon>Bacteria</taxon>
        <taxon>Pseudomonadati</taxon>
        <taxon>Pseudomonadota</taxon>
        <taxon>Gammaproteobacteria</taxon>
        <taxon>Enterobacterales</taxon>
        <taxon>Enterobacteriaceae</taxon>
        <taxon>Escherichia</taxon>
    </lineage>
</organism>
<name>UXUA_ECO7I</name>
<reference key="1">
    <citation type="journal article" date="2009" name="PLoS Genet.">
        <title>Organised genome dynamics in the Escherichia coli species results in highly diverse adaptive paths.</title>
        <authorList>
            <person name="Touchon M."/>
            <person name="Hoede C."/>
            <person name="Tenaillon O."/>
            <person name="Barbe V."/>
            <person name="Baeriswyl S."/>
            <person name="Bidet P."/>
            <person name="Bingen E."/>
            <person name="Bonacorsi S."/>
            <person name="Bouchier C."/>
            <person name="Bouvet O."/>
            <person name="Calteau A."/>
            <person name="Chiapello H."/>
            <person name="Clermont O."/>
            <person name="Cruveiller S."/>
            <person name="Danchin A."/>
            <person name="Diard M."/>
            <person name="Dossat C."/>
            <person name="Karoui M.E."/>
            <person name="Frapy E."/>
            <person name="Garry L."/>
            <person name="Ghigo J.M."/>
            <person name="Gilles A.M."/>
            <person name="Johnson J."/>
            <person name="Le Bouguenec C."/>
            <person name="Lescat M."/>
            <person name="Mangenot S."/>
            <person name="Martinez-Jehanne V."/>
            <person name="Matic I."/>
            <person name="Nassif X."/>
            <person name="Oztas S."/>
            <person name="Petit M.A."/>
            <person name="Pichon C."/>
            <person name="Rouy Z."/>
            <person name="Ruf C.S."/>
            <person name="Schneider D."/>
            <person name="Tourret J."/>
            <person name="Vacherie B."/>
            <person name="Vallenet D."/>
            <person name="Medigue C."/>
            <person name="Rocha E.P.C."/>
            <person name="Denamur E."/>
        </authorList>
    </citation>
    <scope>NUCLEOTIDE SEQUENCE [LARGE SCALE GENOMIC DNA]</scope>
    <source>
        <strain>IAI39 / ExPEC</strain>
    </source>
</reference>
<comment type="function">
    <text evidence="1">Catalyzes the dehydration of D-mannonate.</text>
</comment>
<comment type="catalytic activity">
    <reaction evidence="1">
        <text>D-mannonate = 2-dehydro-3-deoxy-D-gluconate + H2O</text>
        <dbReference type="Rhea" id="RHEA:20097"/>
        <dbReference type="ChEBI" id="CHEBI:15377"/>
        <dbReference type="ChEBI" id="CHEBI:17767"/>
        <dbReference type="ChEBI" id="CHEBI:57990"/>
        <dbReference type="EC" id="4.2.1.8"/>
    </reaction>
</comment>
<comment type="cofactor">
    <cofactor evidence="1">
        <name>Fe(2+)</name>
        <dbReference type="ChEBI" id="CHEBI:29033"/>
    </cofactor>
    <cofactor evidence="1">
        <name>Mn(2+)</name>
        <dbReference type="ChEBI" id="CHEBI:29035"/>
    </cofactor>
</comment>
<comment type="pathway">
    <text evidence="1">Carbohydrate metabolism; pentose and glucuronate interconversion.</text>
</comment>
<comment type="similarity">
    <text evidence="1">Belongs to the mannonate dehydratase family.</text>
</comment>
<accession>B7NV92</accession>
<sequence>MEQTWRWYGPNDPVSLADVRQAGATGVVTALHHIPNGEVWSVEEILKRKAIVEDAGLVWSVVESVPIHEDIKTHTGNYEQWIANYQQTLRNLAQCGIRTVCYNFMPVLDWTRTDLEYVLPDGSKALRFDQIEFAAFEMHILKRPGAEADYTEEEIAQAAVRFATMSDEDKARLTRNIIAGLPGAEEGYTLDQFRKHLELYKDIDKAKLRENFAVFLKAIIPVAEEVGVRMAVHPDDPPRPILGLPRIVSTIEDMQWMVDTVNSMANGFTMCTGSYGVRADNDLVDMIKQFGPRIYFTHLRSTMREDNPKTFHEAAHLNGDVDMYEVVKAIVEEEHRRKAEGKEDLIPMRPDHGHQMLDDLKKKTNPGYSAIGRLKGLAEVRGVELAIQRAFFSR</sequence>